<comment type="function">
    <text evidence="1">Catalyzes the initial step of the lipid cycle reactions in the biosynthesis of the cell wall peptidoglycan: transfers peptidoglycan precursor phospho-MurNAc-pentapeptide from UDP-MurNAc-pentapeptide onto the lipid carrier undecaprenyl phosphate, yielding undecaprenyl-pyrophosphoryl-MurNAc-pentapeptide, known as lipid I.</text>
</comment>
<comment type="catalytic activity">
    <reaction evidence="1">
        <text>UDP-N-acetyl-alpha-D-muramoyl-L-alanyl-gamma-D-glutamyl-meso-2,6-diaminopimeloyl-D-alanyl-D-alanine + di-trans,octa-cis-undecaprenyl phosphate = di-trans,octa-cis-undecaprenyl diphospho-N-acetyl-alpha-D-muramoyl-L-alanyl-D-glutamyl-meso-2,6-diaminopimeloyl-D-alanyl-D-alanine + UMP</text>
        <dbReference type="Rhea" id="RHEA:28386"/>
        <dbReference type="ChEBI" id="CHEBI:57865"/>
        <dbReference type="ChEBI" id="CHEBI:60392"/>
        <dbReference type="ChEBI" id="CHEBI:61386"/>
        <dbReference type="ChEBI" id="CHEBI:61387"/>
        <dbReference type="EC" id="2.7.8.13"/>
    </reaction>
</comment>
<comment type="cofactor">
    <cofactor evidence="1">
        <name>Mg(2+)</name>
        <dbReference type="ChEBI" id="CHEBI:18420"/>
    </cofactor>
</comment>
<comment type="pathway">
    <text evidence="1">Cell wall biogenesis; peptidoglycan biosynthesis.</text>
</comment>
<comment type="subcellular location">
    <subcellularLocation>
        <location evidence="1">Cell membrane</location>
        <topology evidence="1">Multi-pass membrane protein</topology>
    </subcellularLocation>
</comment>
<comment type="similarity">
    <text evidence="1">Belongs to the glycosyltransferase 4 family. MraY subfamily.</text>
</comment>
<feature type="chain" id="PRO_1000002934" description="Phospho-N-acetylmuramoyl-pentapeptide-transferase">
    <location>
        <begin position="1"/>
        <end position="369"/>
    </location>
</feature>
<feature type="transmembrane region" description="Helical" evidence="1">
    <location>
        <begin position="2"/>
        <end position="22"/>
    </location>
</feature>
<feature type="transmembrane region" description="Helical" evidence="1">
    <location>
        <begin position="55"/>
        <end position="75"/>
    </location>
</feature>
<feature type="transmembrane region" description="Helical" evidence="1">
    <location>
        <begin position="86"/>
        <end position="106"/>
    </location>
</feature>
<feature type="transmembrane region" description="Helical" evidence="1">
    <location>
        <begin position="120"/>
        <end position="140"/>
    </location>
</feature>
<feature type="transmembrane region" description="Helical" evidence="1">
    <location>
        <begin position="163"/>
        <end position="183"/>
    </location>
</feature>
<feature type="transmembrane region" description="Helical" evidence="1">
    <location>
        <begin position="196"/>
        <end position="216"/>
    </location>
</feature>
<feature type="transmembrane region" description="Helical" evidence="1">
    <location>
        <begin position="239"/>
        <end position="259"/>
    </location>
</feature>
<feature type="transmembrane region" description="Helical" evidence="1">
    <location>
        <begin position="266"/>
        <end position="286"/>
    </location>
</feature>
<feature type="transmembrane region" description="Helical" evidence="1">
    <location>
        <begin position="291"/>
        <end position="311"/>
    </location>
</feature>
<feature type="transmembrane region" description="Helical" evidence="1">
    <location>
        <begin position="348"/>
        <end position="368"/>
    </location>
</feature>
<sequence length="369" mass="39264">MIALLIGAGVALLVALIGTPLFIRFLVAKSYGQFIRDDGPTSHHTKRGTPTMGGTVVVAAVLISYFVTHLIMWMMNPDSAGPSASGLLLLFLMVGMGFVGFLDDFIKISNKRSLGLNARAKLILQAAVGIIFAVLVLQFPNEDGLRPASTQISLVRDIPWLDLAFGGTVVGAILFVLWSNLIITAATNGVNLTDGLDGLAAGASIMVFGAYTIMGIWQNNQACGSPREAGSGCYQVRDPMDLALLAAILSAALVGFLWWNTSPAKIFMGDTGSLAIGGAVAAFAILSRTELLLAFIGGLFVLITLSVIIQVGFFKLSGGKRVFKMAPLQHHFELKGWDEVTVVVRFWILAGLFVAAGLGIFYAEWVVLL</sequence>
<reference key="1">
    <citation type="journal article" date="2006" name="PLoS Genet.">
        <title>Secrets of soil survival revealed by the genome sequence of Arthrobacter aurescens TC1.</title>
        <authorList>
            <person name="Mongodin E.F."/>
            <person name="Shapir N."/>
            <person name="Daugherty S.C."/>
            <person name="DeBoy R.T."/>
            <person name="Emerson J.B."/>
            <person name="Shvartzbeyn A."/>
            <person name="Radune D."/>
            <person name="Vamathevan J."/>
            <person name="Riggs F."/>
            <person name="Grinberg V."/>
            <person name="Khouri H.M."/>
            <person name="Wackett L.P."/>
            <person name="Nelson K.E."/>
            <person name="Sadowsky M.J."/>
        </authorList>
    </citation>
    <scope>NUCLEOTIDE SEQUENCE [LARGE SCALE GENOMIC DNA]</scope>
    <source>
        <strain>TC1</strain>
    </source>
</reference>
<keyword id="KW-0131">Cell cycle</keyword>
<keyword id="KW-0132">Cell division</keyword>
<keyword id="KW-1003">Cell membrane</keyword>
<keyword id="KW-0133">Cell shape</keyword>
<keyword id="KW-0961">Cell wall biogenesis/degradation</keyword>
<keyword id="KW-0460">Magnesium</keyword>
<keyword id="KW-0472">Membrane</keyword>
<keyword id="KW-0479">Metal-binding</keyword>
<keyword id="KW-0573">Peptidoglycan synthesis</keyword>
<keyword id="KW-0808">Transferase</keyword>
<keyword id="KW-0812">Transmembrane</keyword>
<keyword id="KW-1133">Transmembrane helix</keyword>
<evidence type="ECO:0000255" key="1">
    <source>
        <dbReference type="HAMAP-Rule" id="MF_00038"/>
    </source>
</evidence>
<proteinExistence type="inferred from homology"/>
<accession>A1R5F5</accession>
<protein>
    <recommendedName>
        <fullName evidence="1">Phospho-N-acetylmuramoyl-pentapeptide-transferase</fullName>
        <ecNumber evidence="1">2.7.8.13</ecNumber>
    </recommendedName>
    <alternativeName>
        <fullName evidence="1">UDP-MurNAc-pentapeptide phosphotransferase</fullName>
    </alternativeName>
</protein>
<gene>
    <name evidence="1" type="primary">mraY</name>
    <name type="ordered locus">AAur_1707</name>
</gene>
<organism>
    <name type="scientific">Paenarthrobacter aurescens (strain TC1)</name>
    <dbReference type="NCBI Taxonomy" id="290340"/>
    <lineage>
        <taxon>Bacteria</taxon>
        <taxon>Bacillati</taxon>
        <taxon>Actinomycetota</taxon>
        <taxon>Actinomycetes</taxon>
        <taxon>Micrococcales</taxon>
        <taxon>Micrococcaceae</taxon>
        <taxon>Paenarthrobacter</taxon>
    </lineage>
</organism>
<dbReference type="EC" id="2.7.8.13" evidence="1"/>
<dbReference type="EMBL" id="CP000474">
    <property type="protein sequence ID" value="ABM07466.1"/>
    <property type="molecule type" value="Genomic_DNA"/>
</dbReference>
<dbReference type="RefSeq" id="WP_011774413.1">
    <property type="nucleotide sequence ID" value="NC_008711.1"/>
</dbReference>
<dbReference type="SMR" id="A1R5F5"/>
<dbReference type="STRING" id="290340.AAur_1707"/>
<dbReference type="KEGG" id="aau:AAur_1707"/>
<dbReference type="eggNOG" id="COG0472">
    <property type="taxonomic scope" value="Bacteria"/>
</dbReference>
<dbReference type="HOGENOM" id="CLU_023982_0_1_11"/>
<dbReference type="OrthoDB" id="9805475at2"/>
<dbReference type="UniPathway" id="UPA00219"/>
<dbReference type="Proteomes" id="UP000000637">
    <property type="component" value="Chromosome"/>
</dbReference>
<dbReference type="GO" id="GO:0005886">
    <property type="term" value="C:plasma membrane"/>
    <property type="evidence" value="ECO:0007669"/>
    <property type="project" value="UniProtKB-SubCell"/>
</dbReference>
<dbReference type="GO" id="GO:0046872">
    <property type="term" value="F:metal ion binding"/>
    <property type="evidence" value="ECO:0007669"/>
    <property type="project" value="UniProtKB-KW"/>
</dbReference>
<dbReference type="GO" id="GO:0008963">
    <property type="term" value="F:phospho-N-acetylmuramoyl-pentapeptide-transferase activity"/>
    <property type="evidence" value="ECO:0007669"/>
    <property type="project" value="UniProtKB-UniRule"/>
</dbReference>
<dbReference type="GO" id="GO:0051992">
    <property type="term" value="F:UDP-N-acetylmuramoyl-L-alanyl-D-glutamyl-meso-2,6-diaminopimelyl-D-alanyl-D-alanine:undecaprenyl-phosphate transferase activity"/>
    <property type="evidence" value="ECO:0007669"/>
    <property type="project" value="RHEA"/>
</dbReference>
<dbReference type="GO" id="GO:0051301">
    <property type="term" value="P:cell division"/>
    <property type="evidence" value="ECO:0007669"/>
    <property type="project" value="UniProtKB-KW"/>
</dbReference>
<dbReference type="GO" id="GO:0071555">
    <property type="term" value="P:cell wall organization"/>
    <property type="evidence" value="ECO:0007669"/>
    <property type="project" value="UniProtKB-KW"/>
</dbReference>
<dbReference type="GO" id="GO:0009252">
    <property type="term" value="P:peptidoglycan biosynthetic process"/>
    <property type="evidence" value="ECO:0007669"/>
    <property type="project" value="UniProtKB-UniRule"/>
</dbReference>
<dbReference type="GO" id="GO:0008360">
    <property type="term" value="P:regulation of cell shape"/>
    <property type="evidence" value="ECO:0007669"/>
    <property type="project" value="UniProtKB-KW"/>
</dbReference>
<dbReference type="CDD" id="cd06852">
    <property type="entry name" value="GT_MraY"/>
    <property type="match status" value="1"/>
</dbReference>
<dbReference type="HAMAP" id="MF_00038">
    <property type="entry name" value="MraY"/>
    <property type="match status" value="1"/>
</dbReference>
<dbReference type="InterPro" id="IPR000715">
    <property type="entry name" value="Glycosyl_transferase_4"/>
</dbReference>
<dbReference type="InterPro" id="IPR003524">
    <property type="entry name" value="PNAcMuramoyl-5peptid_Trfase"/>
</dbReference>
<dbReference type="InterPro" id="IPR018480">
    <property type="entry name" value="PNAcMuramoyl-5peptid_Trfase_CS"/>
</dbReference>
<dbReference type="NCBIfam" id="TIGR00445">
    <property type="entry name" value="mraY"/>
    <property type="match status" value="1"/>
</dbReference>
<dbReference type="PANTHER" id="PTHR22926">
    <property type="entry name" value="PHOSPHO-N-ACETYLMURAMOYL-PENTAPEPTIDE-TRANSFERASE"/>
    <property type="match status" value="1"/>
</dbReference>
<dbReference type="PANTHER" id="PTHR22926:SF5">
    <property type="entry name" value="PHOSPHO-N-ACETYLMURAMOYL-PENTAPEPTIDE-TRANSFERASE HOMOLOG"/>
    <property type="match status" value="1"/>
</dbReference>
<dbReference type="Pfam" id="PF00953">
    <property type="entry name" value="Glycos_transf_4"/>
    <property type="match status" value="1"/>
</dbReference>
<dbReference type="Pfam" id="PF10555">
    <property type="entry name" value="MraY_sig1"/>
    <property type="match status" value="1"/>
</dbReference>
<dbReference type="PROSITE" id="PS01348">
    <property type="entry name" value="MRAY_2"/>
    <property type="match status" value="1"/>
</dbReference>
<name>MRAY_PAEAT</name>